<proteinExistence type="evidence at protein level"/>
<comment type="function">
    <text evidence="4 5 6 7">Member of the two-component regulatory system WalK/WalR that regulates genes involved in cell wall metabolism, virulence regulation, biofilm production, oxidative stress resistance and antibiotic resistance via direct or indirect regulation of autolysins (PubMed:17827301, PubMed:22825451). Functions as a transcription regulator by direct binding to promoter regions. Positively controls the cell wall-hydrolytic activity through regulation of atlA and lytM, as well as induces transcription of isaA, sceD, ssaA, and four ssaA-related genes. Binds directly to the lytM, ssaA and isaA promoter regions in vitro.</text>
</comment>
<comment type="subcellular location">
    <subcellularLocation>
        <location evidence="9">Cytoplasm</location>
    </subcellularLocation>
</comment>
<comment type="PTM">
    <text evidence="1 5">Phosphorylated by WalK (PubMed:14762013). Phosphorylated by PknB on Thr-101 (By similarity).</text>
</comment>
<name>WALR_STAA8</name>
<feature type="chain" id="PRO_0000353042" description="Transcriptional regulatory protein WalR">
    <location>
        <begin position="1"/>
        <end position="233"/>
    </location>
</feature>
<feature type="domain" description="Response regulatory" evidence="2">
    <location>
        <begin position="4"/>
        <end position="117"/>
    </location>
</feature>
<feature type="DNA-binding region" description="OmpR/PhoB-type" evidence="3">
    <location>
        <begin position="132"/>
        <end position="231"/>
    </location>
</feature>
<feature type="modified residue" description="4-aspartylphosphate" evidence="2">
    <location>
        <position position="53"/>
    </location>
</feature>
<feature type="modified residue" description="Phosphothreonine" evidence="1">
    <location>
        <position position="101"/>
    </location>
</feature>
<feature type="mutagenesis site" description="Fails to form colonies on rich and defined media at temperatures above 40 degrees Celsius. Increased susceptibility to linoleic acid and oleic acid. Increased susceptibility to macrolide and lincosamide antibiotics." evidence="4">
    <original>E</original>
    <variation>K</variation>
    <location>
        <position position="63"/>
    </location>
</feature>
<accession>Q2G2U6</accession>
<accession>Q9XCM7</accession>
<sequence>MARKVVVVDDEKPIADILEFNLKKEGYDVYCAYDGNDAVDLIYEEEPDIVLLDIMLPGRDGMEVCREVRKKYEMPIIMLTAKDSEIDKVLGLELGADDYVTKPFSTRELIARVKANLRRHYSQPAQDTGNVTNEITIKDIVIYPDAYSIKKRGEDIELTHREFELFHYLSKHMGQVMTREHLLQTVWGYDYFGDVRTVDVTIRRLREKIEDDPSHPEYIVTRRGVGYFLQQHE</sequence>
<keyword id="KW-0010">Activator</keyword>
<keyword id="KW-0963">Cytoplasm</keyword>
<keyword id="KW-0238">DNA-binding</keyword>
<keyword id="KW-0597">Phosphoprotein</keyword>
<keyword id="KW-1185">Reference proteome</keyword>
<keyword id="KW-0804">Transcription</keyword>
<keyword id="KW-0805">Transcription regulation</keyword>
<keyword id="KW-0902">Two-component regulatory system</keyword>
<protein>
    <recommendedName>
        <fullName evidence="9">Transcriptional regulatory protein WalR</fullName>
    </recommendedName>
</protein>
<evidence type="ECO:0000250" key="1">
    <source>
        <dbReference type="UniProtKB" id="Q7A8E1"/>
    </source>
</evidence>
<evidence type="ECO:0000255" key="2">
    <source>
        <dbReference type="PROSITE-ProRule" id="PRU00169"/>
    </source>
</evidence>
<evidence type="ECO:0000255" key="3">
    <source>
        <dbReference type="PROSITE-ProRule" id="PRU01091"/>
    </source>
</evidence>
<evidence type="ECO:0000269" key="4">
    <source>
    </source>
</evidence>
<evidence type="ECO:0000269" key="5">
    <source>
    </source>
</evidence>
<evidence type="ECO:0000269" key="6">
    <source>
    </source>
</evidence>
<evidence type="ECO:0000269" key="7">
    <source>
    </source>
</evidence>
<evidence type="ECO:0000303" key="8">
    <source>
    </source>
</evidence>
<evidence type="ECO:0000305" key="9"/>
<gene>
    <name evidence="8" type="primary">walR</name>
    <name type="synonym">yycF</name>
    <name type="ordered locus">SAOUHSC_00020</name>
</gene>
<organism>
    <name type="scientific">Staphylococcus aureus (strain NCTC 8325 / PS 47)</name>
    <dbReference type="NCBI Taxonomy" id="93061"/>
    <lineage>
        <taxon>Bacteria</taxon>
        <taxon>Bacillati</taxon>
        <taxon>Bacillota</taxon>
        <taxon>Bacilli</taxon>
        <taxon>Bacillales</taxon>
        <taxon>Staphylococcaceae</taxon>
        <taxon>Staphylococcus</taxon>
    </lineage>
</organism>
<dbReference type="EMBL" id="AF136709">
    <property type="protein sequence ID" value="AAD40237.1"/>
    <property type="molecule type" value="Genomic_DNA"/>
</dbReference>
<dbReference type="EMBL" id="CP000253">
    <property type="protein sequence ID" value="ABD29209.1"/>
    <property type="molecule type" value="Genomic_DNA"/>
</dbReference>
<dbReference type="RefSeq" id="WP_000101976.1">
    <property type="nucleotide sequence ID" value="NZ_LS483365.1"/>
</dbReference>
<dbReference type="RefSeq" id="YP_498626.1">
    <property type="nucleotide sequence ID" value="NC_007795.1"/>
</dbReference>
<dbReference type="SMR" id="Q2G2U6"/>
<dbReference type="STRING" id="93061.SAOUHSC_00020"/>
<dbReference type="PaxDb" id="1280-SAXN108_0020"/>
<dbReference type="GeneID" id="3919191"/>
<dbReference type="GeneID" id="98344401"/>
<dbReference type="KEGG" id="sao:SAOUHSC_00020"/>
<dbReference type="PATRIC" id="fig|93061.5.peg.18"/>
<dbReference type="eggNOG" id="COG0745">
    <property type="taxonomic scope" value="Bacteria"/>
</dbReference>
<dbReference type="HOGENOM" id="CLU_000445_30_4_9"/>
<dbReference type="OrthoDB" id="9790442at2"/>
<dbReference type="PHI-base" id="PHI:11718"/>
<dbReference type="PRO" id="PR:Q2G2U6"/>
<dbReference type="Proteomes" id="UP000008816">
    <property type="component" value="Chromosome"/>
</dbReference>
<dbReference type="GO" id="GO:0005829">
    <property type="term" value="C:cytosol"/>
    <property type="evidence" value="ECO:0000318"/>
    <property type="project" value="GO_Central"/>
</dbReference>
<dbReference type="GO" id="GO:0032993">
    <property type="term" value="C:protein-DNA complex"/>
    <property type="evidence" value="ECO:0000318"/>
    <property type="project" value="GO_Central"/>
</dbReference>
<dbReference type="GO" id="GO:0000156">
    <property type="term" value="F:phosphorelay response regulator activity"/>
    <property type="evidence" value="ECO:0000318"/>
    <property type="project" value="GO_Central"/>
</dbReference>
<dbReference type="GO" id="GO:0000976">
    <property type="term" value="F:transcription cis-regulatory region binding"/>
    <property type="evidence" value="ECO:0000318"/>
    <property type="project" value="GO_Central"/>
</dbReference>
<dbReference type="GO" id="GO:0006355">
    <property type="term" value="P:regulation of DNA-templated transcription"/>
    <property type="evidence" value="ECO:0000318"/>
    <property type="project" value="GO_Central"/>
</dbReference>
<dbReference type="CDD" id="cd17614">
    <property type="entry name" value="REC_OmpR_YycF-like"/>
    <property type="match status" value="1"/>
</dbReference>
<dbReference type="CDD" id="cd00383">
    <property type="entry name" value="trans_reg_C"/>
    <property type="match status" value="1"/>
</dbReference>
<dbReference type="FunFam" id="1.10.10.10:FF:000089">
    <property type="entry name" value="Alkaline phosphatase synthesis response regulator"/>
    <property type="match status" value="1"/>
</dbReference>
<dbReference type="FunFam" id="3.40.50.2300:FF:000052">
    <property type="entry name" value="DNA-binding response regulator YycF"/>
    <property type="match status" value="1"/>
</dbReference>
<dbReference type="Gene3D" id="3.40.50.2300">
    <property type="match status" value="1"/>
</dbReference>
<dbReference type="Gene3D" id="6.10.250.690">
    <property type="match status" value="1"/>
</dbReference>
<dbReference type="Gene3D" id="1.10.10.10">
    <property type="entry name" value="Winged helix-like DNA-binding domain superfamily/Winged helix DNA-binding domain"/>
    <property type="match status" value="1"/>
</dbReference>
<dbReference type="InterPro" id="IPR011006">
    <property type="entry name" value="CheY-like_superfamily"/>
</dbReference>
<dbReference type="InterPro" id="IPR001867">
    <property type="entry name" value="OmpR/PhoB-type_DNA-bd"/>
</dbReference>
<dbReference type="InterPro" id="IPR047791">
    <property type="entry name" value="Resp_reg_WalR"/>
</dbReference>
<dbReference type="InterPro" id="IPR016032">
    <property type="entry name" value="Sig_transdc_resp-reg_C-effctor"/>
</dbReference>
<dbReference type="InterPro" id="IPR001789">
    <property type="entry name" value="Sig_transdc_resp-reg_receiver"/>
</dbReference>
<dbReference type="InterPro" id="IPR039420">
    <property type="entry name" value="WalR-like"/>
</dbReference>
<dbReference type="InterPro" id="IPR036388">
    <property type="entry name" value="WH-like_DNA-bd_sf"/>
</dbReference>
<dbReference type="NCBIfam" id="NF040534">
    <property type="entry name" value="resp_reg_YycF"/>
    <property type="match status" value="1"/>
</dbReference>
<dbReference type="PANTHER" id="PTHR48111:SF40">
    <property type="entry name" value="PHOSPHATE REGULON TRANSCRIPTIONAL REGULATORY PROTEIN PHOB"/>
    <property type="match status" value="1"/>
</dbReference>
<dbReference type="PANTHER" id="PTHR48111">
    <property type="entry name" value="REGULATOR OF RPOS"/>
    <property type="match status" value="1"/>
</dbReference>
<dbReference type="Pfam" id="PF00072">
    <property type="entry name" value="Response_reg"/>
    <property type="match status" value="1"/>
</dbReference>
<dbReference type="Pfam" id="PF00486">
    <property type="entry name" value="Trans_reg_C"/>
    <property type="match status" value="1"/>
</dbReference>
<dbReference type="SMART" id="SM00448">
    <property type="entry name" value="REC"/>
    <property type="match status" value="1"/>
</dbReference>
<dbReference type="SMART" id="SM00862">
    <property type="entry name" value="Trans_reg_C"/>
    <property type="match status" value="1"/>
</dbReference>
<dbReference type="SUPFAM" id="SSF46894">
    <property type="entry name" value="C-terminal effector domain of the bipartite response regulators"/>
    <property type="match status" value="1"/>
</dbReference>
<dbReference type="SUPFAM" id="SSF52172">
    <property type="entry name" value="CheY-like"/>
    <property type="match status" value="1"/>
</dbReference>
<dbReference type="PROSITE" id="PS51755">
    <property type="entry name" value="OMPR_PHOB"/>
    <property type="match status" value="1"/>
</dbReference>
<dbReference type="PROSITE" id="PS50110">
    <property type="entry name" value="RESPONSE_REGULATORY"/>
    <property type="match status" value="1"/>
</dbReference>
<reference key="1">
    <citation type="journal article" date="1999" name="J. Bacteriol.">
        <title>Role in cell permeability of an essential two-component system in Staphylococcus aureus.</title>
        <authorList>
            <person name="Martin P.K."/>
            <person name="Li T."/>
            <person name="Sun D."/>
            <person name="Biek D.P."/>
            <person name="Schmid M.B."/>
        </authorList>
    </citation>
    <scope>NUCLEOTIDE SEQUENCE [GENOMIC DNA]</scope>
    <scope>FUNCTION</scope>
    <scope>MUTAGENESIS OF GLU-63</scope>
</reference>
<reference key="2">
    <citation type="book" date="2006" name="Gram positive pathogens, 2nd edition">
        <title>The Staphylococcus aureus NCTC 8325 genome.</title>
        <editorList>
            <person name="Fischetti V."/>
            <person name="Novick R."/>
            <person name="Ferretti J."/>
            <person name="Portnoy D."/>
            <person name="Rood J."/>
        </editorList>
        <authorList>
            <person name="Gillaspy A.F."/>
            <person name="Worrell V."/>
            <person name="Orvis J."/>
            <person name="Roe B.A."/>
            <person name="Dyer D.W."/>
            <person name="Iandolo J.J."/>
        </authorList>
    </citation>
    <scope>NUCLEOTIDE SEQUENCE [LARGE SCALE GENOMIC DNA]</scope>
    <source>
        <strain>NCTC 8325 / PS 47</strain>
    </source>
</reference>
<reference key="3">
    <citation type="journal article" date="2004" name="J. Bacteriol.">
        <title>Identification of genes controlled by the essential YycG/YycF two-component system of Staphylococcus aureus.</title>
        <authorList>
            <person name="Dubrac S."/>
            <person name="Msadek T."/>
        </authorList>
    </citation>
    <scope>FUNCTION IN REGULATING ISAA</scope>
    <scope>LYTM AND SSAA</scope>
    <scope>DNA-BINDING</scope>
    <scope>PHOSPHORYLATION</scope>
</reference>
<reference key="4">
    <citation type="journal article" date="2007" name="J. Bacteriol.">
        <title>New insights into the WalK/WalR (YycG/YycF) essential signal transduction pathway reveal a major role in controlling cell wall metabolism and biofilm formation in Staphylococcus aureus.</title>
        <authorList>
            <person name="Dubrac S."/>
            <person name="Boneca I.G."/>
            <person name="Poupel O."/>
            <person name="Msadek T."/>
        </authorList>
    </citation>
    <scope>FUNCTION IN REGULATING CELL WALL METABOLISM</scope>
    <scope>BIOFILM FORMATION</scope>
    <scope>AUTOLYSIS</scope>
</reference>
<reference key="5">
    <citation type="journal article" date="2012" name="Infect. Immun.">
        <title>The WalKR system controls major staphylococcal virulence genes and is involved in triggering the host inflammatory response.</title>
        <authorList>
            <person name="Delaune A."/>
            <person name="Dubrac S."/>
            <person name="Blanchet C."/>
            <person name="Poupel O."/>
            <person name="Maeder U."/>
            <person name="Hiron A."/>
            <person name="Leduc A."/>
            <person name="Fitting C."/>
            <person name="Nicolas P."/>
            <person name="Cavaillon J.M."/>
            <person name="Adib-Conquy M."/>
            <person name="Msadek T."/>
        </authorList>
    </citation>
    <scope>FUNCTION</scope>
</reference>